<sequence length="270" mass="30991">MNCFQEKQFLRENLLKMPFRMVLTGGSGSGKTIYLLSLFSTLVKKYKHIFLFTPVYNPDYDGYIWPNHINFVSSQESLEYNLIRTKSNIEKCITVAQNHKKSAHFLLIFDDVGDKLSKCNTLIEFLNFGRHLNTSIILLCQTYRHVPILGRANITHFCSFNISISDAENMLRSMPVKGKRKDILNMLNMIQTVRSNNRLAIIIEDSVFCEGELRICTDTADKDVIEQKLNIDILVNQYSHMKKNLNTILESTKTKLCNSDQSSSSKNVSS</sequence>
<reference key="1">
    <citation type="journal article" date="1992" name="J. Gen. Virol.">
        <title>Nucleotide sequence of 21.8 kbp of variola major virus strain Harvey and comparison with vaccinia virus.</title>
        <authorList>
            <person name="Aguado B."/>
            <person name="Selmes I.P."/>
            <person name="Smith G.L."/>
        </authorList>
    </citation>
    <scope>NUCLEOTIDE SEQUENCE [GENOMIC DNA]</scope>
    <source>
        <strain>Harvey</strain>
    </source>
</reference>
<reference key="2">
    <citation type="journal article" date="1993" name="Nature">
        <title>Potential virulence determinants in terminal regions of variola smallpox virus genome.</title>
        <authorList>
            <person name="Massung R.F."/>
            <person name="Esposito J.J."/>
            <person name="Liu L.I."/>
            <person name="Qi J."/>
            <person name="Utterback T.R."/>
            <person name="Knight J.C."/>
            <person name="Aubin L."/>
            <person name="Yuran T.E."/>
            <person name="Parsons J.M."/>
            <person name="Loparev V.N."/>
            <person name="Selivanov N.A."/>
            <person name="Cavallaro K.F."/>
            <person name="Kerlavage A.R."/>
            <person name="Mahy B.W.J."/>
            <person name="Venter J.C."/>
        </authorList>
    </citation>
    <scope>NUCLEOTIDE SEQUENCE [GENOMIC DNA]</scope>
    <source>
        <strain>Bangladesh-1975</strain>
    </source>
</reference>
<reference key="3">
    <citation type="submission" date="1995-12" db="EMBL/GenBank/DDBJ databases">
        <authorList>
            <person name="Shchelkunov S.N."/>
            <person name="Totmenin A.V."/>
            <person name="Resenchuk S.M."/>
            <person name="Blinov V.M."/>
            <person name="Sandakhchiev L.S."/>
        </authorList>
    </citation>
    <scope>NUCLEOTIDE SEQUENCE [GENOMIC DNA]</scope>
    <source>
        <strain>Garcia-1966</strain>
    </source>
</reference>
<comment type="function">
    <text evidence="1">Participates in viral DNA packaging and virion morphogenesis.</text>
</comment>
<comment type="subunit">
    <text evidence="1">Interacts with protein OPG137.</text>
</comment>
<comment type="similarity">
    <text evidence="3">Belongs to the orthopoxvirus OPG160 protein family.</text>
</comment>
<feature type="chain" id="PRO_0000448229" description="DNA packaging protein OPG160">
    <location>
        <begin position="1"/>
        <end position="270"/>
    </location>
</feature>
<feature type="binding site" evidence="2">
    <location>
        <begin position="25"/>
        <end position="32"/>
    </location>
    <ligand>
        <name>ATP</name>
        <dbReference type="ChEBI" id="CHEBI:30616"/>
    </ligand>
</feature>
<dbReference type="EMBL" id="L22579">
    <property type="protein sequence ID" value="AAA60887.1"/>
    <property type="molecule type" value="Genomic_DNA"/>
</dbReference>
<dbReference type="EMBL" id="X76266">
    <property type="protein sequence ID" value="CAA53861.1"/>
    <property type="molecule type" value="Genomic_DNA"/>
</dbReference>
<dbReference type="PIR" id="A72168">
    <property type="entry name" value="A72168"/>
</dbReference>
<dbReference type="PIR" id="T28577">
    <property type="entry name" value="T28577"/>
</dbReference>
<dbReference type="RefSeq" id="NP_042183.1">
    <property type="nucleotide sequence ID" value="NC_001611.1"/>
</dbReference>
<dbReference type="GeneID" id="1486513"/>
<dbReference type="KEGG" id="vg:1486513"/>
<dbReference type="Proteomes" id="UP000119805">
    <property type="component" value="Segment"/>
</dbReference>
<dbReference type="GO" id="GO:0005524">
    <property type="term" value="F:ATP binding"/>
    <property type="evidence" value="ECO:0007669"/>
    <property type="project" value="UniProtKB-KW"/>
</dbReference>
<dbReference type="Gene3D" id="3.40.50.300">
    <property type="entry name" value="P-loop containing nucleotide triphosphate hydrolases"/>
    <property type="match status" value="1"/>
</dbReference>
<dbReference type="InterPro" id="IPR006758">
    <property type="entry name" value="A32L"/>
</dbReference>
<dbReference type="InterPro" id="IPR027417">
    <property type="entry name" value="P-loop_NTPase"/>
</dbReference>
<dbReference type="Pfam" id="PF04665">
    <property type="entry name" value="Pox_A32"/>
    <property type="match status" value="1"/>
</dbReference>
<dbReference type="SUPFAM" id="SSF52540">
    <property type="entry name" value="P-loop containing nucleoside triphosphate hydrolases"/>
    <property type="match status" value="1"/>
</dbReference>
<gene>
    <name type="primary">OPG160</name>
    <name type="ORF">A32L</name>
    <name type="ORF">A35L</name>
</gene>
<organismHost>
    <name type="scientific">Homo sapiens</name>
    <name type="common">Human</name>
    <dbReference type="NCBI Taxonomy" id="9606"/>
</organismHost>
<evidence type="ECO:0000250" key="1">
    <source>
        <dbReference type="UniProtKB" id="P68615"/>
    </source>
</evidence>
<evidence type="ECO:0000255" key="2"/>
<evidence type="ECO:0000305" key="3"/>
<name>PG160_VARV</name>
<accession>P0DSZ9</accession>
<accession>P33849</accession>
<protein>
    <recommendedName>
        <fullName>DNA packaging protein OPG160</fullName>
    </recommendedName>
</protein>
<keyword id="KW-0067">ATP-binding</keyword>
<keyword id="KW-0547">Nucleotide-binding</keyword>
<organism>
    <name type="scientific">Variola virus</name>
    <dbReference type="NCBI Taxonomy" id="10255"/>
    <lineage>
        <taxon>Viruses</taxon>
        <taxon>Varidnaviria</taxon>
        <taxon>Bamfordvirae</taxon>
        <taxon>Nucleocytoviricota</taxon>
        <taxon>Pokkesviricetes</taxon>
        <taxon>Chitovirales</taxon>
        <taxon>Poxviridae</taxon>
        <taxon>Chordopoxvirinae</taxon>
        <taxon>Orthopoxvirus</taxon>
    </lineage>
</organism>
<proteinExistence type="inferred from homology"/>